<organism>
    <name type="scientific">Xenopus laevis</name>
    <name type="common">African clawed frog</name>
    <dbReference type="NCBI Taxonomy" id="8355"/>
    <lineage>
        <taxon>Eukaryota</taxon>
        <taxon>Metazoa</taxon>
        <taxon>Chordata</taxon>
        <taxon>Craniata</taxon>
        <taxon>Vertebrata</taxon>
        <taxon>Euteleostomi</taxon>
        <taxon>Amphibia</taxon>
        <taxon>Batrachia</taxon>
        <taxon>Anura</taxon>
        <taxon>Pipoidea</taxon>
        <taxon>Pipidae</taxon>
        <taxon>Xenopodinae</taxon>
        <taxon>Xenopus</taxon>
        <taxon>Xenopus</taxon>
    </lineage>
</organism>
<evidence type="ECO:0000250" key="1"/>
<evidence type="ECO:0000250" key="2">
    <source>
        <dbReference type="UniProtKB" id="Q5FVE4"/>
    </source>
</evidence>
<evidence type="ECO:0000305" key="3"/>
<keyword id="KW-0067">ATP-binding</keyword>
<keyword id="KW-0963">Cytoplasm</keyword>
<keyword id="KW-0276">Fatty acid metabolism</keyword>
<keyword id="KW-0436">Ligase</keyword>
<keyword id="KW-0443">Lipid metabolism</keyword>
<keyword id="KW-0547">Nucleotide-binding</keyword>
<keyword id="KW-1185">Reference proteome</keyword>
<proteinExistence type="evidence at transcript level"/>
<gene>
    <name evidence="2" type="primary">acsbg2</name>
</gene>
<protein>
    <recommendedName>
        <fullName evidence="2">Long-chain-fatty-acid--CoA ligase ACSBG2</fullName>
        <ecNumber evidence="2">6.2.1.3</ecNumber>
    </recommendedName>
    <alternativeName>
        <fullName>Acyl-CoA synthetase bubblegum family member 2</fullName>
    </alternativeName>
    <alternativeName>
        <fullName evidence="2">Arachidonate--CoA ligase ACSBG2</fullName>
        <ecNumber evidence="2">6.2.1.15</ecNumber>
    </alternativeName>
</protein>
<comment type="function">
    <text evidence="2">Catalyzes the conversion of fatty acids such as long chain and very long-chain fatty acids to their active form acyl-CoAs for both synthesis of cellular lipids, and degradation via beta-oxidation. Can activate diverse saturated, monosaturated and polyunsaturated fatty acids.</text>
</comment>
<comment type="catalytic activity">
    <reaction evidence="2">
        <text>a long-chain fatty acid + ATP + CoA = a long-chain fatty acyl-CoA + AMP + diphosphate</text>
        <dbReference type="Rhea" id="RHEA:15421"/>
        <dbReference type="ChEBI" id="CHEBI:30616"/>
        <dbReference type="ChEBI" id="CHEBI:33019"/>
        <dbReference type="ChEBI" id="CHEBI:57287"/>
        <dbReference type="ChEBI" id="CHEBI:57560"/>
        <dbReference type="ChEBI" id="CHEBI:83139"/>
        <dbReference type="ChEBI" id="CHEBI:456215"/>
        <dbReference type="EC" id="6.2.1.3"/>
    </reaction>
    <physiologicalReaction direction="left-to-right" evidence="2">
        <dbReference type="Rhea" id="RHEA:15422"/>
    </physiologicalReaction>
</comment>
<comment type="catalytic activity">
    <reaction evidence="2">
        <text>(5Z,8Z,11Z,14Z)-eicosatetraenoate + ATP + CoA = (5Z,8Z,11Z,14Z)-eicosatetraenoyl-CoA + AMP + diphosphate</text>
        <dbReference type="Rhea" id="RHEA:19713"/>
        <dbReference type="ChEBI" id="CHEBI:30616"/>
        <dbReference type="ChEBI" id="CHEBI:32395"/>
        <dbReference type="ChEBI" id="CHEBI:33019"/>
        <dbReference type="ChEBI" id="CHEBI:57287"/>
        <dbReference type="ChEBI" id="CHEBI:57368"/>
        <dbReference type="ChEBI" id="CHEBI:456215"/>
        <dbReference type="EC" id="6.2.1.15"/>
    </reaction>
    <physiologicalReaction direction="left-to-right" evidence="2">
        <dbReference type="Rhea" id="RHEA:19714"/>
    </physiologicalReaction>
</comment>
<comment type="catalytic activity">
    <reaction evidence="2">
        <text>hexadecanoate + ATP + CoA = hexadecanoyl-CoA + AMP + diphosphate</text>
        <dbReference type="Rhea" id="RHEA:30751"/>
        <dbReference type="ChEBI" id="CHEBI:7896"/>
        <dbReference type="ChEBI" id="CHEBI:30616"/>
        <dbReference type="ChEBI" id="CHEBI:33019"/>
        <dbReference type="ChEBI" id="CHEBI:57287"/>
        <dbReference type="ChEBI" id="CHEBI:57379"/>
        <dbReference type="ChEBI" id="CHEBI:456215"/>
    </reaction>
    <physiologicalReaction direction="left-to-right" evidence="2">
        <dbReference type="Rhea" id="RHEA:30752"/>
    </physiologicalReaction>
</comment>
<comment type="catalytic activity">
    <reaction evidence="2">
        <text>(9Z)-octadecenoate + ATP + CoA = (9Z)-octadecenoyl-CoA + AMP + diphosphate</text>
        <dbReference type="Rhea" id="RHEA:33607"/>
        <dbReference type="ChEBI" id="CHEBI:30616"/>
        <dbReference type="ChEBI" id="CHEBI:30823"/>
        <dbReference type="ChEBI" id="CHEBI:33019"/>
        <dbReference type="ChEBI" id="CHEBI:57287"/>
        <dbReference type="ChEBI" id="CHEBI:57387"/>
        <dbReference type="ChEBI" id="CHEBI:456215"/>
    </reaction>
    <physiologicalReaction direction="left-to-right" evidence="2">
        <dbReference type="Rhea" id="RHEA:33608"/>
    </physiologicalReaction>
</comment>
<comment type="catalytic activity">
    <reaction evidence="2">
        <text>(9Z,12Z)-octadecadienoate + ATP + CoA = (9Z,12Z)-octadecadienoyl-CoA + AMP + diphosphate</text>
        <dbReference type="Rhea" id="RHEA:33651"/>
        <dbReference type="ChEBI" id="CHEBI:30245"/>
        <dbReference type="ChEBI" id="CHEBI:30616"/>
        <dbReference type="ChEBI" id="CHEBI:33019"/>
        <dbReference type="ChEBI" id="CHEBI:57287"/>
        <dbReference type="ChEBI" id="CHEBI:57383"/>
        <dbReference type="ChEBI" id="CHEBI:456215"/>
    </reaction>
    <physiologicalReaction direction="left-to-right" evidence="2">
        <dbReference type="Rhea" id="RHEA:33652"/>
    </physiologicalReaction>
</comment>
<comment type="catalytic activity">
    <reaction evidence="2">
        <text>tetracosanoate + ATP + CoA = tetracosanoyl-CoA + AMP + diphosphate</text>
        <dbReference type="Rhea" id="RHEA:33639"/>
        <dbReference type="ChEBI" id="CHEBI:30616"/>
        <dbReference type="ChEBI" id="CHEBI:31014"/>
        <dbReference type="ChEBI" id="CHEBI:33019"/>
        <dbReference type="ChEBI" id="CHEBI:57287"/>
        <dbReference type="ChEBI" id="CHEBI:65052"/>
        <dbReference type="ChEBI" id="CHEBI:456215"/>
    </reaction>
    <physiologicalReaction direction="left-to-right" evidence="2">
        <dbReference type="Rhea" id="RHEA:33640"/>
    </physiologicalReaction>
</comment>
<comment type="subcellular location">
    <subcellularLocation>
        <location evidence="1">Cytoplasm</location>
    </subcellularLocation>
</comment>
<comment type="similarity">
    <text evidence="3">Belongs to the ATP-dependent AMP-binding enzyme family. Bubblegum subfamily.</text>
</comment>
<accession>Q7ZYC4</accession>
<accession>Q2TAG2</accession>
<feature type="chain" id="PRO_0000315816" description="Long-chain-fatty-acid--CoA ligase ACSBG2">
    <location>
        <begin position="1"/>
        <end position="739"/>
    </location>
</feature>
<feature type="binding site" evidence="1">
    <location>
        <begin position="287"/>
        <end position="295"/>
    </location>
    <ligand>
        <name>ATP</name>
        <dbReference type="ChEBI" id="CHEBI:30616"/>
    </ligand>
</feature>
<feature type="binding site" evidence="1">
    <location>
        <begin position="478"/>
        <end position="483"/>
    </location>
    <ligand>
        <name>ATP</name>
        <dbReference type="ChEBI" id="CHEBI:30616"/>
    </ligand>
</feature>
<feature type="binding site" evidence="1">
    <location>
        <position position="556"/>
    </location>
    <ligand>
        <name>ATP</name>
        <dbReference type="ChEBI" id="CHEBI:30616"/>
    </ligand>
</feature>
<feature type="binding site" evidence="1">
    <location>
        <position position="571"/>
    </location>
    <ligand>
        <name>ATP</name>
        <dbReference type="ChEBI" id="CHEBI:30616"/>
    </ligand>
</feature>
<feature type="binding site" evidence="1">
    <location>
        <position position="684"/>
    </location>
    <ligand>
        <name>ATP</name>
        <dbReference type="ChEBI" id="CHEBI:30616"/>
    </ligand>
</feature>
<feature type="sequence conflict" description="In Ref. 1; AAI10944." evidence="3" ref="1">
    <original>P</original>
    <variation>S</variation>
    <location>
        <position position="45"/>
    </location>
</feature>
<feature type="sequence conflict" description="In Ref. 1; AAI10944." evidence="3" ref="1">
    <original>E</original>
    <variation>D</variation>
    <location>
        <position position="48"/>
    </location>
</feature>
<feature type="sequence conflict" description="In Ref. 1; AAI10944." evidence="3" ref="1">
    <original>H</original>
    <variation>Q</variation>
    <location>
        <position position="71"/>
    </location>
</feature>
<feature type="sequence conflict" description="In Ref. 1; AAI10944." evidence="3" ref="1">
    <location>
        <position position="74"/>
    </location>
</feature>
<dbReference type="EC" id="6.2.1.3" evidence="2"/>
<dbReference type="EC" id="6.2.1.15" evidence="2"/>
<dbReference type="EMBL" id="BC043850">
    <property type="protein sequence ID" value="AAH43850.1"/>
    <property type="molecule type" value="mRNA"/>
</dbReference>
<dbReference type="EMBL" id="BC110943">
    <property type="protein sequence ID" value="AAI10944.1"/>
    <property type="molecule type" value="mRNA"/>
</dbReference>
<dbReference type="RefSeq" id="NP_001079494.1">
    <property type="nucleotide sequence ID" value="NM_001086025.1"/>
</dbReference>
<dbReference type="SMR" id="Q7ZYC4"/>
<dbReference type="DNASU" id="379181"/>
<dbReference type="GeneID" id="379181"/>
<dbReference type="KEGG" id="xla:379181"/>
<dbReference type="AGR" id="Xenbase:XB-GENE-1006643"/>
<dbReference type="CTD" id="379181"/>
<dbReference type="Xenbase" id="XB-GENE-1006643">
    <property type="gene designation" value="acsbg2.L"/>
</dbReference>
<dbReference type="OrthoDB" id="3633556at2759"/>
<dbReference type="Proteomes" id="UP000186698">
    <property type="component" value="Chromosome 1L"/>
</dbReference>
<dbReference type="Bgee" id="379181">
    <property type="expression patterns" value="Expressed in kidney and 19 other cell types or tissues"/>
</dbReference>
<dbReference type="GO" id="GO:0005783">
    <property type="term" value="C:endoplasmic reticulum"/>
    <property type="evidence" value="ECO:0000318"/>
    <property type="project" value="GO_Central"/>
</dbReference>
<dbReference type="GO" id="GO:0016020">
    <property type="term" value="C:membrane"/>
    <property type="evidence" value="ECO:0000318"/>
    <property type="project" value="GO_Central"/>
</dbReference>
<dbReference type="GO" id="GO:0047676">
    <property type="term" value="F:arachidonate-CoA ligase activity"/>
    <property type="evidence" value="ECO:0000250"/>
    <property type="project" value="UniProtKB"/>
</dbReference>
<dbReference type="GO" id="GO:0005524">
    <property type="term" value="F:ATP binding"/>
    <property type="evidence" value="ECO:0007669"/>
    <property type="project" value="UniProtKB-KW"/>
</dbReference>
<dbReference type="GO" id="GO:0004467">
    <property type="term" value="F:long-chain fatty acid-CoA ligase activity"/>
    <property type="evidence" value="ECO:0000250"/>
    <property type="project" value="UniProtKB"/>
</dbReference>
<dbReference type="CDD" id="cd05933">
    <property type="entry name" value="ACSBG_like"/>
    <property type="match status" value="1"/>
</dbReference>
<dbReference type="Gene3D" id="3.40.50.12780">
    <property type="entry name" value="N-terminal domain of ligase-like"/>
    <property type="match status" value="1"/>
</dbReference>
<dbReference type="InterPro" id="IPR020845">
    <property type="entry name" value="AMP-binding_CS"/>
</dbReference>
<dbReference type="InterPro" id="IPR000873">
    <property type="entry name" value="AMP-dep_synth/lig_dom"/>
</dbReference>
<dbReference type="InterPro" id="IPR042099">
    <property type="entry name" value="ANL_N_sf"/>
</dbReference>
<dbReference type="PANTHER" id="PTHR43272:SF101">
    <property type="entry name" value="ACYL-COA SYNTHETASE BUBBLEGUM FAMILY MEMBER 2-RELATED"/>
    <property type="match status" value="1"/>
</dbReference>
<dbReference type="PANTHER" id="PTHR43272">
    <property type="entry name" value="LONG-CHAIN-FATTY-ACID--COA LIGASE"/>
    <property type="match status" value="1"/>
</dbReference>
<dbReference type="Pfam" id="PF00501">
    <property type="entry name" value="AMP-binding"/>
    <property type="match status" value="1"/>
</dbReference>
<dbReference type="Pfam" id="PF23562">
    <property type="entry name" value="AMP-binding_C_3"/>
    <property type="match status" value="1"/>
</dbReference>
<dbReference type="SUPFAM" id="SSF56801">
    <property type="entry name" value="Acetyl-CoA synthetase-like"/>
    <property type="match status" value="1"/>
</dbReference>
<dbReference type="PROSITE" id="PS00455">
    <property type="entry name" value="AMP_BINDING"/>
    <property type="match status" value="1"/>
</dbReference>
<name>ACBG2_XENLA</name>
<reference key="1">
    <citation type="submission" date="2003-01" db="EMBL/GenBank/DDBJ databases">
        <authorList>
            <consortium name="NIH - Xenopus Gene Collection (XGC) project"/>
        </authorList>
    </citation>
    <scope>NUCLEOTIDE SEQUENCE [LARGE SCALE MRNA]</scope>
    <source>
        <tissue>Embryo</tissue>
        <tissue>Oocyte</tissue>
    </source>
</reference>
<sequence>MAAVISNSSGTELYVDPTKAIPDLCINDVVLSTPPCYAEETLVQPSAEINTSNSSEKPIVPEISSSDVMVHSAVENLPTSDMKLWTAQRDSAVKLRLEDSDVASLPPVTIHQLFQETVNKYGDYVALASKQGDQWHKMSYKQYYEQCRIAAKGFIKLGLERYHGVGILGFNSAEWFIADVGAIFAGGFAVGIYTTNSAEACHYVAQNCEANIIVVENQKQLQKILQVQDQLPHLKAIIQYKDELKEKRPNLYTWKEFMQLGKDIPDSQLDQIISSQKPNQCCTLIYTSGTTGQPKGVMLSHDNITWTAAAAGKTVRLREATDLQEIVVSYLPLSHIAAQMIDIWLTMKYGGATYFAQPDALKGSLAITLREVRPTAFMGVPRVWEKMQEKMKAVGAKSSTIKRKMATWAKGVGLETNLKKMNGSTPHPMKYHVANKLVFKKVRKALGLDRCTKCYTGAAPITKDTLEFFLSLNIPVYELYGMSESSGPHTISLPDAFRITSCGKVISGCKTKIHQPDSDGSGEILFWGRHVFMGYLNMEDKTHESLDEEGWLHSGDIGKHDENGFLYITGRIKELIITAGGENIPPVPTEDAVKEQVPIISNAMLIGDKKKFLSMLLTLKCNVNADTGEPEDELTPEAIQFCRQIGSKATLVSDIVGGKDTAVYAAIQEGVNSVNEKSTSNAQKVQKWLILEKDFSITGGELGPTMKLKRPVVAKMYKDQIDSFYQDAGTPTENFTPPK</sequence>